<accession>O82569</accession>
<name>SUI1_SPUBR</name>
<dbReference type="EMBL" id="AF091857">
    <property type="protein sequence ID" value="AAC61599.1"/>
    <property type="molecule type" value="mRNA"/>
</dbReference>
<dbReference type="SMR" id="O82569"/>
<dbReference type="GO" id="GO:0003743">
    <property type="term" value="F:translation initiation factor activity"/>
    <property type="evidence" value="ECO:0007669"/>
    <property type="project" value="InterPro"/>
</dbReference>
<dbReference type="GO" id="GO:0006417">
    <property type="term" value="P:regulation of translation"/>
    <property type="evidence" value="ECO:0007669"/>
    <property type="project" value="UniProtKB-KW"/>
</dbReference>
<dbReference type="CDD" id="cd11566">
    <property type="entry name" value="eIF1_SUI1"/>
    <property type="match status" value="1"/>
</dbReference>
<dbReference type="FunFam" id="3.30.780.10:FF:000001">
    <property type="entry name" value="Eukaryotic translation initiation factor SUI1"/>
    <property type="match status" value="1"/>
</dbReference>
<dbReference type="Gene3D" id="3.30.780.10">
    <property type="entry name" value="SUI1-like domain"/>
    <property type="match status" value="1"/>
</dbReference>
<dbReference type="InterPro" id="IPR001950">
    <property type="entry name" value="SUI1"/>
</dbReference>
<dbReference type="InterPro" id="IPR036877">
    <property type="entry name" value="SUI1_dom_sf"/>
</dbReference>
<dbReference type="InterPro" id="IPR005874">
    <property type="entry name" value="SUI1_euk"/>
</dbReference>
<dbReference type="NCBIfam" id="TIGR01160">
    <property type="entry name" value="SUI1_MOF2"/>
    <property type="match status" value="1"/>
</dbReference>
<dbReference type="PANTHER" id="PTHR10388">
    <property type="entry name" value="EUKARYOTIC TRANSLATION INITIATION FACTOR SUI1"/>
    <property type="match status" value="1"/>
</dbReference>
<dbReference type="Pfam" id="PF01253">
    <property type="entry name" value="SUI1"/>
    <property type="match status" value="1"/>
</dbReference>
<dbReference type="PIRSF" id="PIRSF004499">
    <property type="entry name" value="SUI1_euk"/>
    <property type="match status" value="1"/>
</dbReference>
<dbReference type="SUPFAM" id="SSF55159">
    <property type="entry name" value="eIF1-like"/>
    <property type="match status" value="1"/>
</dbReference>
<dbReference type="PROSITE" id="PS50296">
    <property type="entry name" value="SUI1"/>
    <property type="match status" value="1"/>
</dbReference>
<organism>
    <name type="scientific">Spuriopimpinella brachycarpa</name>
    <name type="common">Chamnamul</name>
    <name type="synonym">Pimpinella brachycarpa</name>
    <dbReference type="NCBI Taxonomy" id="45043"/>
    <lineage>
        <taxon>Eukaryota</taxon>
        <taxon>Viridiplantae</taxon>
        <taxon>Streptophyta</taxon>
        <taxon>Embryophyta</taxon>
        <taxon>Tracheophyta</taxon>
        <taxon>Spermatophyta</taxon>
        <taxon>Magnoliopsida</taxon>
        <taxon>eudicotyledons</taxon>
        <taxon>Gunneridae</taxon>
        <taxon>Pentapetalae</taxon>
        <taxon>asterids</taxon>
        <taxon>campanulids</taxon>
        <taxon>Apiales</taxon>
        <taxon>Apiaceae</taxon>
        <taxon>Apioideae</taxon>
        <taxon>Acronema clade</taxon>
        <taxon>Spuriopimpinella</taxon>
    </lineage>
</organism>
<proteinExistence type="inferred from homology"/>
<keyword id="KW-0648">Protein biosynthesis</keyword>
<keyword id="KW-0810">Translation regulation</keyword>
<comment type="function">
    <text>Probably involved in translation.</text>
</comment>
<comment type="similarity">
    <text evidence="1">Belongs to the SUI1 family.</text>
</comment>
<reference key="1">
    <citation type="submission" date="1998-09" db="EMBL/GenBank/DDBJ databases">
        <authorList>
            <person name="Cho J.-I."/>
            <person name="Lee K.-W."/>
        </authorList>
    </citation>
    <scope>NUCLEOTIDE SEQUENCE [MRNA]</scope>
</reference>
<evidence type="ECO:0000305" key="1"/>
<protein>
    <recommendedName>
        <fullName>Protein translation factor SUI1 homolog</fullName>
    </recommendedName>
</protein>
<feature type="chain" id="PRO_0000130572" description="Protein translation factor SUI1 homolog">
    <location>
        <begin position="1"/>
        <end position="113"/>
    </location>
</feature>
<sequence length="113" mass="12678">MVDSDIQIPTSFDPFAEAEITDATGSTKEYVHIRIQQRNGRKSLTTVQGLKKELSYDKILKDLKKALCCNGTVVNDKELGKVIQLQGDQRKNVSTFIVQAGIVKKDQIKVHNF</sequence>